<organism>
    <name type="scientific">Bacillus thuringiensis subsp. kurstaki</name>
    <dbReference type="NCBI Taxonomy" id="29339"/>
    <lineage>
        <taxon>Bacteria</taxon>
        <taxon>Bacillati</taxon>
        <taxon>Bacillota</taxon>
        <taxon>Bacilli</taxon>
        <taxon>Bacillales</taxon>
        <taxon>Bacillaceae</taxon>
        <taxon>Bacillus</taxon>
        <taxon>Bacillus cereus group</taxon>
    </lineage>
</organism>
<protein>
    <recommendedName>
        <fullName>Pesticidal crystal protein Cry1Ia</fullName>
    </recommendedName>
    <alternativeName>
        <fullName>81 kDa crystal protein</fullName>
    </alternativeName>
    <alternativeName>
        <fullName>Crystaline entomocidal protoxin</fullName>
    </alternativeName>
    <alternativeName>
        <fullName>Insecticidal delta-endotoxin CryII(a)</fullName>
    </alternativeName>
</protein>
<name>CR1IA_BACTK</name>
<proteinExistence type="evidence at transcript level"/>
<sequence length="719" mass="81216">MKLKNQDKHQSFSSNAKVDKISTDSLKNETDIELQNINHEDCLKMSEYENVEPFVSASTIQTGIGIAGKILGTLGVPFAGQVASLYSFILGELWPKGKNQWEIFMEHVEEIINQKISTYARNKALTDLKGLGDALAVYHDSLESWVGNRNNTRARSVVKSQYIALELMFVQKLPSFAVSGEEVPLLPIYAQAANLHLLLLRDASIFGKEWGLSSSEISTFYNRQVERAGDYSDHCVKWYSTGLNNLRGTNAESWVRYNQFRRDMTLMVLDLVALFPSYDTQMYPIKTTAQLTREVYTDAIGTVHPHPSFTSTTWYNNNAPSFSAIEAAVVRNPHLLDFLEQVTIYSLLSRWSNTQYMNMWGGHKLEFRTIGGTLNISTQGSTNTSINPVTLPFTSRDVYRTESLAGLNLFLTQPVNGVPRVDFHWKFVTHPIASDNFYYPGYAGIGTQLQDSENELPPEATGQPNYESYSHRLSHIGLISASHVKALVYSWTHRSADRTNTIEPNSITQIPLVKAFNLSSGAAVVRGPGFTGGDILRRTNTGTFGDIRVNINPPFAQRYRVRIRYASTTDLQFHTSINGKAINQGNFSATMNRGEDLDYKTFRTVGFTTPFSFLDVQSTFTIGAWNFSSGNEVYIDRIEFVPVEVTYEAEYDFEKAQEKVTALFTSTNPRGLKTDVKDYHIDQVSNLVESLSDEFYLDEKRELFEIVKYAKQLHIERNM</sequence>
<keyword id="KW-0749">Sporulation</keyword>
<keyword id="KW-0800">Toxin</keyword>
<keyword id="KW-0843">Virulence</keyword>
<reference key="1">
    <citation type="journal article" date="1993" name="Appl. Environ. Microbiol.">
        <title>Screening by polymerase chain reaction of Bacillus thuringiensis serotypes for the presence of cryV-like insecticidal protein genes and characterization of a cryV gene cloned from B. thuringiensis subsp. kurstaki.</title>
        <authorList>
            <person name="Gleave A.P."/>
            <person name="Williams R."/>
            <person name="Hedges R.J."/>
        </authorList>
    </citation>
    <scope>NUCLEOTIDE SEQUENCE [GENOMIC DNA]</scope>
    <source>
        <strain>DSIR732</strain>
    </source>
</reference>
<reference key="2">
    <citation type="journal article" date="1992" name="Mol. Microbiol.">
        <title>Identification and characterization of a novel Bacillus thuringiensis delta-endotoxin entomocidal to coleopteran and lepidopteran larvae.</title>
        <authorList>
            <person name="Tailor R."/>
            <person name="Tippett J."/>
            <person name="Gibb G."/>
            <person name="Pells S."/>
            <person name="Pike D."/>
            <person name="Jordan L."/>
            <person name="Ely S."/>
        </authorList>
    </citation>
    <scope>NUCLEOTIDE SEQUENCE [GENOMIC DNA]</scope>
    <source>
        <strain>JHCC4835</strain>
    </source>
</reference>
<reference key="3">
    <citation type="journal article" date="1995" name="Appl. Environ. Microbiol.">
        <title>Distribution of cryV-type insecticidal protein genes in Bacillus thuringiensis and cloning of cryV-type genes from Bacillus thuringiensis subsp. kurstaki and Bacillus thuringiensis subsp. entomocidus.</title>
        <authorList>
            <person name="Shin B.-S."/>
            <person name="Park S.-H."/>
            <person name="Choi S.-K."/>
            <person name="Koo B.T."/>
            <person name="Lee S.T."/>
            <person name="Kim J.I."/>
        </authorList>
    </citation>
    <scope>NUCLEOTIDE SEQUENCE [GENOMIC DNA]</scope>
    <source>
        <strain>HD-1</strain>
    </source>
</reference>
<reference key="4">
    <citation type="journal article" date="1996" name="J. Bacteriol.">
        <title>Cloning of a cryV-type insecticidal protein gene from Bacillus thuringiensis: the cryV-encoded protein is expressed early in stationary phase.</title>
        <authorList>
            <person name="Kostichka K."/>
            <person name="Warren G.W."/>
            <person name="Mullins M."/>
            <person name="Mullins A.D."/>
            <person name="Palekar N.V."/>
            <person name="Craig J.A."/>
            <person name="Koziel M.G."/>
            <person name="Estruch J.J."/>
        </authorList>
    </citation>
    <scope>NUCLEOTIDE SEQUENCE [GENOMIC DNA]</scope>
    <source>
        <strain>AB88</strain>
    </source>
</reference>
<reference key="5">
    <citation type="submission" date="1996-10" db="EMBL/GenBank/DDBJ databases">
        <title>Isolation, cloning and expression of cryV gene.</title>
        <authorList>
            <person name="Selvapandiyan A."/>
            <person name="Bhatnagar R.K."/>
        </authorList>
    </citation>
    <scope>NUCLEOTIDE SEQUENCE [GENOMIC DNA]</scope>
    <source>
        <strain>61</strain>
    </source>
</reference>
<feature type="chain" id="PRO_0000174048" description="Pesticidal crystal protein Cry1Ia">
    <location>
        <begin position="1"/>
        <end position="719"/>
    </location>
</feature>
<feature type="sequence variant" description="In strain: 61.">
    <original>K</original>
    <variation>R</variation>
    <location>
        <position position="159"/>
    </location>
</feature>
<feature type="sequence variant" description="In strain: JHCC4835 and HD-1.">
    <original>D</original>
    <variation>Y</variation>
    <location>
        <position position="233"/>
    </location>
</feature>
<feature type="sequence variant" description="In strain: AB88.">
    <original>A</original>
    <variation>V</variation>
    <location>
        <position position="443"/>
    </location>
</feature>
<feature type="sequence variant" description="In strain: HD-1 and 61.">
    <original>KQ</original>
    <variation>NE</variation>
    <location>
        <begin position="711"/>
        <end position="712"/>
    </location>
</feature>
<dbReference type="EMBL" id="M98544">
    <property type="protein sequence ID" value="AAA22354.1"/>
    <property type="molecule type" value="Genomic_DNA"/>
</dbReference>
<dbReference type="EMBL" id="X62821">
    <property type="protein sequence ID" value="CAA44633.1"/>
    <property type="molecule type" value="Genomic_DNA"/>
</dbReference>
<dbReference type="EMBL" id="L36338">
    <property type="protein sequence ID" value="AAC36999.1"/>
    <property type="molecule type" value="Genomic_DNA"/>
</dbReference>
<dbReference type="EMBL" id="L49391">
    <property type="protein sequence ID" value="AAB00958.1"/>
    <property type="molecule type" value="Genomic_DNA"/>
</dbReference>
<dbReference type="EMBL" id="Y08920">
    <property type="protein sequence ID" value="CAA70124.1"/>
    <property type="molecule type" value="Genomic_DNA"/>
</dbReference>
<dbReference type="PIR" id="I39814">
    <property type="entry name" value="I39814"/>
</dbReference>
<dbReference type="PIR" id="I39815">
    <property type="entry name" value="I39815"/>
</dbReference>
<dbReference type="PIR" id="S25383">
    <property type="entry name" value="S25383"/>
</dbReference>
<dbReference type="RefSeq" id="WP_000769223.1">
    <property type="nucleotide sequence ID" value="NZ_PGEH01000276.1"/>
</dbReference>
<dbReference type="SMR" id="Q45752"/>
<dbReference type="GO" id="GO:0005102">
    <property type="term" value="F:signaling receptor binding"/>
    <property type="evidence" value="ECO:0007669"/>
    <property type="project" value="InterPro"/>
</dbReference>
<dbReference type="GO" id="GO:0090729">
    <property type="term" value="F:toxin activity"/>
    <property type="evidence" value="ECO:0007669"/>
    <property type="project" value="UniProtKB-KW"/>
</dbReference>
<dbReference type="GO" id="GO:0030435">
    <property type="term" value="P:sporulation resulting in formation of a cellular spore"/>
    <property type="evidence" value="ECO:0007669"/>
    <property type="project" value="UniProtKB-KW"/>
</dbReference>
<dbReference type="GO" id="GO:0001907">
    <property type="term" value="P:symbiont-mediated killing of host cell"/>
    <property type="evidence" value="ECO:0007669"/>
    <property type="project" value="InterPro"/>
</dbReference>
<dbReference type="CDD" id="cd04085">
    <property type="entry name" value="delta_endotoxin_C"/>
    <property type="match status" value="1"/>
</dbReference>
<dbReference type="Gene3D" id="2.60.120.260">
    <property type="entry name" value="Galactose-binding domain-like"/>
    <property type="match status" value="1"/>
</dbReference>
<dbReference type="Gene3D" id="2.100.10.10">
    <property type="entry name" value="Pesticidal crystal protein, central domain"/>
    <property type="match status" value="1"/>
</dbReference>
<dbReference type="Gene3D" id="1.20.190.10">
    <property type="entry name" value="Pesticidal crystal protein, N-terminal domain"/>
    <property type="match status" value="1"/>
</dbReference>
<dbReference type="InterPro" id="IPR008979">
    <property type="entry name" value="Galactose-bd-like_sf"/>
</dbReference>
<dbReference type="InterPro" id="IPR038979">
    <property type="entry name" value="Pest_crys"/>
</dbReference>
<dbReference type="InterPro" id="IPR005638">
    <property type="entry name" value="Pest_crys_dom-III"/>
</dbReference>
<dbReference type="InterPro" id="IPR005639">
    <property type="entry name" value="Pest_crys_dom_I"/>
</dbReference>
<dbReference type="InterPro" id="IPR036716">
    <property type="entry name" value="Pest_crys_N_sf"/>
</dbReference>
<dbReference type="InterPro" id="IPR036399">
    <property type="entry name" value="Pest_cryst_cen_dom_sf"/>
</dbReference>
<dbReference type="InterPro" id="IPR001178">
    <property type="entry name" value="Pest_cryst_dom_II"/>
</dbReference>
<dbReference type="PANTHER" id="PTHR37003">
    <property type="entry name" value="ENDOTOXIN_N DOMAIN-CONTAINING PROTEIN-RELATED"/>
    <property type="match status" value="1"/>
</dbReference>
<dbReference type="PANTHER" id="PTHR37003:SF2">
    <property type="entry name" value="PESTICIDAL CRYSTAL PROTEIN N-TERMINAL DOMAIN-CONTAINING PROTEIN"/>
    <property type="match status" value="1"/>
</dbReference>
<dbReference type="Pfam" id="PF03944">
    <property type="entry name" value="Endotoxin_C"/>
    <property type="match status" value="1"/>
</dbReference>
<dbReference type="Pfam" id="PF00555">
    <property type="entry name" value="Endotoxin_M"/>
    <property type="match status" value="1"/>
</dbReference>
<dbReference type="Pfam" id="PF03945">
    <property type="entry name" value="Endotoxin_N"/>
    <property type="match status" value="1"/>
</dbReference>
<dbReference type="SUPFAM" id="SSF51096">
    <property type="entry name" value="delta-Endotoxin (insectocide), middle domain"/>
    <property type="match status" value="1"/>
</dbReference>
<dbReference type="SUPFAM" id="SSF56849">
    <property type="entry name" value="delta-Endotoxin (insectocide), N-terminal domain"/>
    <property type="match status" value="1"/>
</dbReference>
<dbReference type="SUPFAM" id="SSF49785">
    <property type="entry name" value="Galactose-binding domain-like"/>
    <property type="match status" value="1"/>
</dbReference>
<accession>Q45752</accession>
<accession>P71092</accession>
<accession>Q45750</accession>
<accession>Q45751</accession>
<accession>Q45756</accession>
<evidence type="ECO:0000305" key="1"/>
<gene>
    <name type="primary">cry1Ia</name>
    <name type="synonym">CGCryV</name>
    <name type="synonym">cryII(a)</name>
    <name type="synonym">cryV</name>
    <name type="synonym">cryV1</name>
</gene>
<comment type="function">
    <text>Promotes colloidosmotic lysis by binding to the midgut epithelial cells of certain coleopteran and lepidopteran species. Active on Plutella xylostella and Bombyx mori.</text>
</comment>
<comment type="developmental stage">
    <text>The crystal protein is produced during sporulation and is accumulated both as an inclusion and as part of the spore coat.</text>
</comment>
<comment type="miscellaneous">
    <text>Toxic segment of the protein is located in the N-terminus.</text>
</comment>
<comment type="similarity">
    <text evidence="1">Belongs to the delta endotoxin family.</text>
</comment>